<dbReference type="EC" id="7.1.1.-" evidence="1"/>
<dbReference type="EMBL" id="CP000409">
    <property type="protein sequence ID" value="ABV73930.1"/>
    <property type="molecule type" value="Genomic_DNA"/>
</dbReference>
<dbReference type="RefSeq" id="WP_012149125.1">
    <property type="nucleotide sequence ID" value="NC_009879.1"/>
</dbReference>
<dbReference type="SMR" id="A8EZZ7"/>
<dbReference type="STRING" id="293613.A1E_05070"/>
<dbReference type="KEGG" id="rcm:A1E_05070"/>
<dbReference type="eggNOG" id="COG1143">
    <property type="taxonomic scope" value="Bacteria"/>
</dbReference>
<dbReference type="HOGENOM" id="CLU_067218_5_1_5"/>
<dbReference type="Proteomes" id="UP000007056">
    <property type="component" value="Chromosome"/>
</dbReference>
<dbReference type="GO" id="GO:0005886">
    <property type="term" value="C:plasma membrane"/>
    <property type="evidence" value="ECO:0007669"/>
    <property type="project" value="UniProtKB-SubCell"/>
</dbReference>
<dbReference type="GO" id="GO:0051539">
    <property type="term" value="F:4 iron, 4 sulfur cluster binding"/>
    <property type="evidence" value="ECO:0007669"/>
    <property type="project" value="UniProtKB-KW"/>
</dbReference>
<dbReference type="GO" id="GO:0005506">
    <property type="term" value="F:iron ion binding"/>
    <property type="evidence" value="ECO:0007669"/>
    <property type="project" value="UniProtKB-UniRule"/>
</dbReference>
<dbReference type="GO" id="GO:0050136">
    <property type="term" value="F:NADH:ubiquinone reductase (non-electrogenic) activity"/>
    <property type="evidence" value="ECO:0007669"/>
    <property type="project" value="UniProtKB-UniRule"/>
</dbReference>
<dbReference type="GO" id="GO:0048038">
    <property type="term" value="F:quinone binding"/>
    <property type="evidence" value="ECO:0007669"/>
    <property type="project" value="UniProtKB-KW"/>
</dbReference>
<dbReference type="GO" id="GO:0009060">
    <property type="term" value="P:aerobic respiration"/>
    <property type="evidence" value="ECO:0007669"/>
    <property type="project" value="TreeGrafter"/>
</dbReference>
<dbReference type="FunFam" id="3.30.70.3270:FF:000001">
    <property type="entry name" value="NADH-quinone oxidoreductase subunit I 1"/>
    <property type="match status" value="1"/>
</dbReference>
<dbReference type="Gene3D" id="3.30.70.3270">
    <property type="match status" value="1"/>
</dbReference>
<dbReference type="HAMAP" id="MF_01351">
    <property type="entry name" value="NDH1_NuoI"/>
    <property type="match status" value="1"/>
</dbReference>
<dbReference type="InterPro" id="IPR017896">
    <property type="entry name" value="4Fe4S_Fe-S-bd"/>
</dbReference>
<dbReference type="InterPro" id="IPR017900">
    <property type="entry name" value="4Fe4S_Fe_S_CS"/>
</dbReference>
<dbReference type="InterPro" id="IPR010226">
    <property type="entry name" value="NADH_quinone_OxRdtase_chainI"/>
</dbReference>
<dbReference type="NCBIfam" id="TIGR01971">
    <property type="entry name" value="NuoI"/>
    <property type="match status" value="1"/>
</dbReference>
<dbReference type="NCBIfam" id="NF004538">
    <property type="entry name" value="PRK05888.1-4"/>
    <property type="match status" value="1"/>
</dbReference>
<dbReference type="NCBIfam" id="NF004539">
    <property type="entry name" value="PRK05888.1-5"/>
    <property type="match status" value="1"/>
</dbReference>
<dbReference type="PANTHER" id="PTHR10849:SF20">
    <property type="entry name" value="NADH DEHYDROGENASE [UBIQUINONE] IRON-SULFUR PROTEIN 8, MITOCHONDRIAL"/>
    <property type="match status" value="1"/>
</dbReference>
<dbReference type="PANTHER" id="PTHR10849">
    <property type="entry name" value="NADH DEHYDROGENASE UBIQUINONE IRON-SULFUR PROTEIN 8, MITOCHONDRIAL"/>
    <property type="match status" value="1"/>
</dbReference>
<dbReference type="Pfam" id="PF12838">
    <property type="entry name" value="Fer4_7"/>
    <property type="match status" value="1"/>
</dbReference>
<dbReference type="SUPFAM" id="SSF54862">
    <property type="entry name" value="4Fe-4S ferredoxins"/>
    <property type="match status" value="1"/>
</dbReference>
<dbReference type="PROSITE" id="PS00198">
    <property type="entry name" value="4FE4S_FER_1"/>
    <property type="match status" value="2"/>
</dbReference>
<dbReference type="PROSITE" id="PS51379">
    <property type="entry name" value="4FE4S_FER_2"/>
    <property type="match status" value="2"/>
</dbReference>
<feature type="chain" id="PRO_1000143667" description="NADH-quinone oxidoreductase subunit I">
    <location>
        <begin position="1"/>
        <end position="159"/>
    </location>
</feature>
<feature type="domain" description="4Fe-4S ferredoxin-type 1" evidence="1">
    <location>
        <begin position="51"/>
        <end position="80"/>
    </location>
</feature>
<feature type="domain" description="4Fe-4S ferredoxin-type 2" evidence="1">
    <location>
        <begin position="90"/>
        <end position="119"/>
    </location>
</feature>
<feature type="binding site" evidence="1">
    <location>
        <position position="60"/>
    </location>
    <ligand>
        <name>[4Fe-4S] cluster</name>
        <dbReference type="ChEBI" id="CHEBI:49883"/>
        <label>1</label>
    </ligand>
</feature>
<feature type="binding site" evidence="1">
    <location>
        <position position="63"/>
    </location>
    <ligand>
        <name>[4Fe-4S] cluster</name>
        <dbReference type="ChEBI" id="CHEBI:49883"/>
        <label>1</label>
    </ligand>
</feature>
<feature type="binding site" evidence="1">
    <location>
        <position position="66"/>
    </location>
    <ligand>
        <name>[4Fe-4S] cluster</name>
        <dbReference type="ChEBI" id="CHEBI:49883"/>
        <label>1</label>
    </ligand>
</feature>
<feature type="binding site" evidence="1">
    <location>
        <position position="70"/>
    </location>
    <ligand>
        <name>[4Fe-4S] cluster</name>
        <dbReference type="ChEBI" id="CHEBI:49883"/>
        <label>2</label>
    </ligand>
</feature>
<feature type="binding site" evidence="1">
    <location>
        <position position="99"/>
    </location>
    <ligand>
        <name>[4Fe-4S] cluster</name>
        <dbReference type="ChEBI" id="CHEBI:49883"/>
        <label>2</label>
    </ligand>
</feature>
<feature type="binding site" evidence="1">
    <location>
        <position position="102"/>
    </location>
    <ligand>
        <name>[4Fe-4S] cluster</name>
        <dbReference type="ChEBI" id="CHEBI:49883"/>
        <label>2</label>
    </ligand>
</feature>
<feature type="binding site" evidence="1">
    <location>
        <position position="105"/>
    </location>
    <ligand>
        <name>[4Fe-4S] cluster</name>
        <dbReference type="ChEBI" id="CHEBI:49883"/>
        <label>2</label>
    </ligand>
</feature>
<feature type="binding site" evidence="1">
    <location>
        <position position="109"/>
    </location>
    <ligand>
        <name>[4Fe-4S] cluster</name>
        <dbReference type="ChEBI" id="CHEBI:49883"/>
        <label>1</label>
    </ligand>
</feature>
<accession>A8EZZ7</accession>
<name>NUOI_RICCK</name>
<reference key="1">
    <citation type="submission" date="2007-09" db="EMBL/GenBank/DDBJ databases">
        <title>Complete genome sequence of Rickettsia canadensis.</title>
        <authorList>
            <person name="Madan A."/>
            <person name="Fahey J."/>
            <person name="Helton E."/>
            <person name="Ketteman M."/>
            <person name="Madan A."/>
            <person name="Rodrigues S."/>
            <person name="Sanchez A."/>
            <person name="Whiting M."/>
            <person name="Dasch G."/>
            <person name="Eremeeva M."/>
        </authorList>
    </citation>
    <scope>NUCLEOTIDE SEQUENCE [LARGE SCALE GENOMIC DNA]</scope>
    <source>
        <strain>McKiel</strain>
    </source>
</reference>
<protein>
    <recommendedName>
        <fullName evidence="1">NADH-quinone oxidoreductase subunit I</fullName>
        <ecNumber evidence="1">7.1.1.-</ecNumber>
    </recommendedName>
    <alternativeName>
        <fullName evidence="1">NADH dehydrogenase I subunit I</fullName>
    </alternativeName>
    <alternativeName>
        <fullName evidence="1">NDH-1 subunit I</fullName>
    </alternativeName>
</protein>
<comment type="function">
    <text evidence="1">NDH-1 shuttles electrons from NADH, via FMN and iron-sulfur (Fe-S) centers, to quinones in the respiratory chain. The immediate electron acceptor for the enzyme in this species is believed to be ubiquinone. Couples the redox reaction to proton translocation (for every two electrons transferred, four hydrogen ions are translocated across the cytoplasmic membrane), and thus conserves the redox energy in a proton gradient.</text>
</comment>
<comment type="catalytic activity">
    <reaction evidence="1">
        <text>a quinone + NADH + 5 H(+)(in) = a quinol + NAD(+) + 4 H(+)(out)</text>
        <dbReference type="Rhea" id="RHEA:57888"/>
        <dbReference type="ChEBI" id="CHEBI:15378"/>
        <dbReference type="ChEBI" id="CHEBI:24646"/>
        <dbReference type="ChEBI" id="CHEBI:57540"/>
        <dbReference type="ChEBI" id="CHEBI:57945"/>
        <dbReference type="ChEBI" id="CHEBI:132124"/>
    </reaction>
</comment>
<comment type="cofactor">
    <cofactor evidence="1">
        <name>[4Fe-4S] cluster</name>
        <dbReference type="ChEBI" id="CHEBI:49883"/>
    </cofactor>
    <text evidence="1">Binds 2 [4Fe-4S] clusters per subunit.</text>
</comment>
<comment type="subunit">
    <text evidence="1">NDH-1 is composed of 14 different subunits. Subunits NuoA, H, J, K, L, M, N constitute the membrane sector of the complex.</text>
</comment>
<comment type="subcellular location">
    <subcellularLocation>
        <location evidence="1">Cell inner membrane</location>
        <topology evidence="1">Peripheral membrane protein</topology>
    </subcellularLocation>
</comment>
<comment type="similarity">
    <text evidence="1">Belongs to the complex I 23 kDa subunit family.</text>
</comment>
<sequence>MINYLKSFFLYEIVRGMALTLRYFFKAKVTINYPYEKSPVSPRFKGEHALRRYENGVERCIACKLCEAICPAQAIVIEAEALDDGSRRTTRYDIDMTKCIYCGLCQEACPVDAIVEGPNFEFASLTHTALIYDKERLLQNGDKWEQALTSKLYKDYEYR</sequence>
<gene>
    <name evidence="1" type="primary">nuoI</name>
    <name type="ordered locus">A1E_05070</name>
</gene>
<keyword id="KW-0004">4Fe-4S</keyword>
<keyword id="KW-0997">Cell inner membrane</keyword>
<keyword id="KW-1003">Cell membrane</keyword>
<keyword id="KW-0408">Iron</keyword>
<keyword id="KW-0411">Iron-sulfur</keyword>
<keyword id="KW-0472">Membrane</keyword>
<keyword id="KW-0479">Metal-binding</keyword>
<keyword id="KW-0520">NAD</keyword>
<keyword id="KW-0874">Quinone</keyword>
<keyword id="KW-0677">Repeat</keyword>
<keyword id="KW-1278">Translocase</keyword>
<keyword id="KW-0830">Ubiquinone</keyword>
<organism>
    <name type="scientific">Rickettsia canadensis (strain McKiel)</name>
    <dbReference type="NCBI Taxonomy" id="293613"/>
    <lineage>
        <taxon>Bacteria</taxon>
        <taxon>Pseudomonadati</taxon>
        <taxon>Pseudomonadota</taxon>
        <taxon>Alphaproteobacteria</taxon>
        <taxon>Rickettsiales</taxon>
        <taxon>Rickettsiaceae</taxon>
        <taxon>Rickettsieae</taxon>
        <taxon>Rickettsia</taxon>
        <taxon>belli group</taxon>
    </lineage>
</organism>
<evidence type="ECO:0000255" key="1">
    <source>
        <dbReference type="HAMAP-Rule" id="MF_01351"/>
    </source>
</evidence>
<proteinExistence type="inferred from homology"/>